<comment type="function">
    <text evidence="1">Catalyzes the last two sequential reactions in the de novo biosynthetic pathway for UDP-N-acetylglucosamine (UDP-GlcNAc). The C-terminal domain catalyzes the transfer of acetyl group from acetyl coenzyme A to glucosamine-1-phosphate (GlcN-1-P) to produce N-acetylglucosamine-1-phosphate (GlcNAc-1-P), which is converted into UDP-GlcNAc by the transfer of uridine 5-monophosphate (from uridine 5-triphosphate), a reaction catalyzed by the N-terminal domain.</text>
</comment>
<comment type="catalytic activity">
    <reaction evidence="1">
        <text>alpha-D-glucosamine 1-phosphate + acetyl-CoA = N-acetyl-alpha-D-glucosamine 1-phosphate + CoA + H(+)</text>
        <dbReference type="Rhea" id="RHEA:13725"/>
        <dbReference type="ChEBI" id="CHEBI:15378"/>
        <dbReference type="ChEBI" id="CHEBI:57287"/>
        <dbReference type="ChEBI" id="CHEBI:57288"/>
        <dbReference type="ChEBI" id="CHEBI:57776"/>
        <dbReference type="ChEBI" id="CHEBI:58516"/>
        <dbReference type="EC" id="2.3.1.157"/>
    </reaction>
</comment>
<comment type="catalytic activity">
    <reaction evidence="1">
        <text>N-acetyl-alpha-D-glucosamine 1-phosphate + UTP + H(+) = UDP-N-acetyl-alpha-D-glucosamine + diphosphate</text>
        <dbReference type="Rhea" id="RHEA:13509"/>
        <dbReference type="ChEBI" id="CHEBI:15378"/>
        <dbReference type="ChEBI" id="CHEBI:33019"/>
        <dbReference type="ChEBI" id="CHEBI:46398"/>
        <dbReference type="ChEBI" id="CHEBI:57705"/>
        <dbReference type="ChEBI" id="CHEBI:57776"/>
        <dbReference type="EC" id="2.7.7.23"/>
    </reaction>
</comment>
<comment type="cofactor">
    <cofactor evidence="1">
        <name>Mg(2+)</name>
        <dbReference type="ChEBI" id="CHEBI:18420"/>
    </cofactor>
    <text evidence="1">Binds 1 Mg(2+) ion per subunit.</text>
</comment>
<comment type="pathway">
    <text evidence="1">Nucleotide-sugar biosynthesis; UDP-N-acetyl-alpha-D-glucosamine biosynthesis; N-acetyl-alpha-D-glucosamine 1-phosphate from alpha-D-glucosamine 6-phosphate (route II): step 2/2.</text>
</comment>
<comment type="pathway">
    <text evidence="1">Nucleotide-sugar biosynthesis; UDP-N-acetyl-alpha-D-glucosamine biosynthesis; UDP-N-acetyl-alpha-D-glucosamine from N-acetyl-alpha-D-glucosamine 1-phosphate: step 1/1.</text>
</comment>
<comment type="pathway">
    <text evidence="1">Bacterial outer membrane biogenesis; LPS lipid A biosynthesis.</text>
</comment>
<comment type="subunit">
    <text evidence="1">Homotrimer.</text>
</comment>
<comment type="subcellular location">
    <subcellularLocation>
        <location evidence="1">Cytoplasm</location>
    </subcellularLocation>
</comment>
<comment type="similarity">
    <text evidence="1">In the N-terminal section; belongs to the N-acetylglucosamine-1-phosphate uridyltransferase family.</text>
</comment>
<comment type="similarity">
    <text evidence="1">In the C-terminal section; belongs to the transferase hexapeptide repeat family.</text>
</comment>
<keyword id="KW-0012">Acyltransferase</keyword>
<keyword id="KW-0133">Cell shape</keyword>
<keyword id="KW-0961">Cell wall biogenesis/degradation</keyword>
<keyword id="KW-0963">Cytoplasm</keyword>
<keyword id="KW-0460">Magnesium</keyword>
<keyword id="KW-0479">Metal-binding</keyword>
<keyword id="KW-0511">Multifunctional enzyme</keyword>
<keyword id="KW-0548">Nucleotidyltransferase</keyword>
<keyword id="KW-0573">Peptidoglycan synthesis</keyword>
<keyword id="KW-0677">Repeat</keyword>
<keyword id="KW-0808">Transferase</keyword>
<organism>
    <name type="scientific">Mycobacterium bovis (strain BCG / Tokyo 172 / ATCC 35737 / TMC 1019)</name>
    <dbReference type="NCBI Taxonomy" id="561275"/>
    <lineage>
        <taxon>Bacteria</taxon>
        <taxon>Bacillati</taxon>
        <taxon>Actinomycetota</taxon>
        <taxon>Actinomycetes</taxon>
        <taxon>Mycobacteriales</taxon>
        <taxon>Mycobacteriaceae</taxon>
        <taxon>Mycobacterium</taxon>
        <taxon>Mycobacterium tuberculosis complex</taxon>
    </lineage>
</organism>
<sequence length="495" mass="51584">MTFPGDTAVLVLAAGPGTRMRSDTPKVLHTLAGRSMLSHVLHAIAKLAPQRLIVVLGHDHQRIAPLVGELADTLGRTIDVALQDRPLGTGHAVLCGLSALPDDYAGNVVVTSGDTPLLDADTLADLIATHRAVSAAVTVLTTTLDDPFGYGRILRTQDHEVMAIVEQTDATPSQREIREVNAGVYAFDIAALRSALSRLSSNNAQQELYLTDVIAILRSDGQTVHASHVDDSALVAGVNNRVQLAELASELNRRVVAAHQLAGVTVVDPATTWIDVDVTIGRDTVIHPGTQLLGRTQIGGRCVVGPDTTLTDVAVGDGASVVRTHGSSSSIGDGAAVGPFTYLRPGTALGADGKLGAFVEVKNSTIGTGTKVPHLTYVGDADIGEYSNIGASSVFVNYDGTSKRRTTVGSHVRTGSDTMFVAPVTIGDGAYTGAGTVVREDVPPGALAVSAGPQRNIENWVQRKRPGSPAAQASKRASEMACQQPTQPPDADQTP</sequence>
<feature type="chain" id="PRO_1000186466" description="Bifunctional protein GlmU">
    <location>
        <begin position="1"/>
        <end position="495"/>
    </location>
</feature>
<feature type="region of interest" description="Pyrophosphorylase" evidence="1">
    <location>
        <begin position="1"/>
        <end position="241"/>
    </location>
</feature>
<feature type="region of interest" description="Linker" evidence="1">
    <location>
        <begin position="242"/>
        <end position="262"/>
    </location>
</feature>
<feature type="region of interest" description="N-acetyltransferase" evidence="1">
    <location>
        <begin position="263"/>
        <end position="495"/>
    </location>
</feature>
<feature type="region of interest" description="Disordered" evidence="2">
    <location>
        <begin position="457"/>
        <end position="495"/>
    </location>
</feature>
<feature type="compositionally biased region" description="Low complexity" evidence="2">
    <location>
        <begin position="483"/>
        <end position="495"/>
    </location>
</feature>
<feature type="active site" description="Proton acceptor" evidence="1">
    <location>
        <position position="374"/>
    </location>
</feature>
<feature type="binding site" evidence="1">
    <location>
        <begin position="12"/>
        <end position="15"/>
    </location>
    <ligand>
        <name>UDP-N-acetyl-alpha-D-glucosamine</name>
        <dbReference type="ChEBI" id="CHEBI:57705"/>
    </ligand>
</feature>
<feature type="binding site" evidence="1">
    <location>
        <position position="26"/>
    </location>
    <ligand>
        <name>UDP-N-acetyl-alpha-D-glucosamine</name>
        <dbReference type="ChEBI" id="CHEBI:57705"/>
    </ligand>
</feature>
<feature type="binding site" evidence="1">
    <location>
        <position position="83"/>
    </location>
    <ligand>
        <name>UDP-N-acetyl-alpha-D-glucosamine</name>
        <dbReference type="ChEBI" id="CHEBI:57705"/>
    </ligand>
</feature>
<feature type="binding site" evidence="1">
    <location>
        <begin position="88"/>
        <end position="89"/>
    </location>
    <ligand>
        <name>UDP-N-acetyl-alpha-D-glucosamine</name>
        <dbReference type="ChEBI" id="CHEBI:57705"/>
    </ligand>
</feature>
<feature type="binding site" evidence="1">
    <location>
        <begin position="112"/>
        <end position="114"/>
    </location>
    <ligand>
        <name>UDP-N-acetyl-alpha-D-glucosamine</name>
        <dbReference type="ChEBI" id="CHEBI:57705"/>
    </ligand>
</feature>
<feature type="binding site" evidence="1">
    <location>
        <position position="114"/>
    </location>
    <ligand>
        <name>Mg(2+)</name>
        <dbReference type="ChEBI" id="CHEBI:18420"/>
    </ligand>
</feature>
<feature type="binding site" evidence="1">
    <location>
        <position position="151"/>
    </location>
    <ligand>
        <name>UDP-N-acetyl-alpha-D-glucosamine</name>
        <dbReference type="ChEBI" id="CHEBI:57705"/>
    </ligand>
</feature>
<feature type="binding site" evidence="1">
    <location>
        <position position="166"/>
    </location>
    <ligand>
        <name>UDP-N-acetyl-alpha-D-glucosamine</name>
        <dbReference type="ChEBI" id="CHEBI:57705"/>
    </ligand>
</feature>
<feature type="binding site" evidence="1">
    <location>
        <position position="181"/>
    </location>
    <ligand>
        <name>UDP-N-acetyl-alpha-D-glucosamine</name>
        <dbReference type="ChEBI" id="CHEBI:57705"/>
    </ligand>
</feature>
<feature type="binding site" evidence="1">
    <location>
        <position position="239"/>
    </location>
    <ligand>
        <name>Mg(2+)</name>
        <dbReference type="ChEBI" id="CHEBI:18420"/>
    </ligand>
</feature>
<feature type="binding site" evidence="1">
    <location>
        <position position="239"/>
    </location>
    <ligand>
        <name>UDP-N-acetyl-alpha-D-glucosamine</name>
        <dbReference type="ChEBI" id="CHEBI:57705"/>
    </ligand>
</feature>
<feature type="binding site" evidence="1">
    <location>
        <position position="344"/>
    </location>
    <ligand>
        <name>UDP-N-acetyl-alpha-D-glucosamine</name>
        <dbReference type="ChEBI" id="CHEBI:57705"/>
    </ligand>
</feature>
<feature type="binding site" evidence="1">
    <location>
        <position position="362"/>
    </location>
    <ligand>
        <name>UDP-N-acetyl-alpha-D-glucosamine</name>
        <dbReference type="ChEBI" id="CHEBI:57705"/>
    </ligand>
</feature>
<feature type="binding site" evidence="1">
    <location>
        <position position="377"/>
    </location>
    <ligand>
        <name>UDP-N-acetyl-alpha-D-glucosamine</name>
        <dbReference type="ChEBI" id="CHEBI:57705"/>
    </ligand>
</feature>
<feature type="binding site" evidence="1">
    <location>
        <position position="388"/>
    </location>
    <ligand>
        <name>UDP-N-acetyl-alpha-D-glucosamine</name>
        <dbReference type="ChEBI" id="CHEBI:57705"/>
    </ligand>
</feature>
<feature type="binding site" evidence="1">
    <location>
        <position position="391"/>
    </location>
    <ligand>
        <name>acetyl-CoA</name>
        <dbReference type="ChEBI" id="CHEBI:57288"/>
    </ligand>
</feature>
<feature type="binding site" evidence="1">
    <location>
        <begin position="397"/>
        <end position="398"/>
    </location>
    <ligand>
        <name>acetyl-CoA</name>
        <dbReference type="ChEBI" id="CHEBI:57288"/>
    </ligand>
</feature>
<feature type="binding site" evidence="1">
    <location>
        <position position="416"/>
    </location>
    <ligand>
        <name>acetyl-CoA</name>
        <dbReference type="ChEBI" id="CHEBI:57288"/>
    </ligand>
</feature>
<feature type="binding site" evidence="1">
    <location>
        <position position="434"/>
    </location>
    <ligand>
        <name>acetyl-CoA</name>
        <dbReference type="ChEBI" id="CHEBI:57288"/>
    </ligand>
</feature>
<gene>
    <name evidence="1" type="primary">glmU</name>
    <name type="ordered locus">JTY_1047</name>
</gene>
<reference key="1">
    <citation type="journal article" date="2009" name="Vaccine">
        <title>Whole genome sequence analysis of Mycobacterium bovis bacillus Calmette-Guerin (BCG) Tokyo 172: a comparative study of BCG vaccine substrains.</title>
        <authorList>
            <person name="Seki M."/>
            <person name="Honda I."/>
            <person name="Fujita I."/>
            <person name="Yano I."/>
            <person name="Yamamoto S."/>
            <person name="Koyama A."/>
        </authorList>
    </citation>
    <scope>NUCLEOTIDE SEQUENCE [LARGE SCALE GENOMIC DNA]</scope>
    <source>
        <strain>BCG / Tokyo 172 / ATCC 35737 / TMC 1019</strain>
    </source>
</reference>
<protein>
    <recommendedName>
        <fullName evidence="1">Bifunctional protein GlmU</fullName>
    </recommendedName>
    <domain>
        <recommendedName>
            <fullName evidence="1">UDP-N-acetylglucosamine pyrophosphorylase</fullName>
            <ecNumber evidence="1">2.7.7.23</ecNumber>
        </recommendedName>
        <alternativeName>
            <fullName evidence="1">N-acetylglucosamine-1-phosphate uridyltransferase</fullName>
        </alternativeName>
    </domain>
    <domain>
        <recommendedName>
            <fullName evidence="1">Glucosamine-1-phosphate N-acetyltransferase</fullName>
            <ecNumber evidence="1">2.3.1.157</ecNumber>
        </recommendedName>
    </domain>
</protein>
<accession>C1AM09</accession>
<evidence type="ECO:0000255" key="1">
    <source>
        <dbReference type="HAMAP-Rule" id="MF_01631"/>
    </source>
</evidence>
<evidence type="ECO:0000256" key="2">
    <source>
        <dbReference type="SAM" id="MobiDB-lite"/>
    </source>
</evidence>
<dbReference type="EC" id="2.7.7.23" evidence="1"/>
<dbReference type="EC" id="2.3.1.157" evidence="1"/>
<dbReference type="EMBL" id="AP010918">
    <property type="protein sequence ID" value="BAH25338.1"/>
    <property type="molecule type" value="Genomic_DNA"/>
</dbReference>
<dbReference type="RefSeq" id="WP_003405267.1">
    <property type="nucleotide sequence ID" value="NZ_CP014566.1"/>
</dbReference>
<dbReference type="SMR" id="C1AM09"/>
<dbReference type="KEGG" id="mbt:JTY_1047"/>
<dbReference type="HOGENOM" id="CLU_029499_15_2_11"/>
<dbReference type="UniPathway" id="UPA00113">
    <property type="reaction ID" value="UER00532"/>
</dbReference>
<dbReference type="UniPathway" id="UPA00113">
    <property type="reaction ID" value="UER00533"/>
</dbReference>
<dbReference type="UniPathway" id="UPA00973"/>
<dbReference type="GO" id="GO:0005737">
    <property type="term" value="C:cytoplasm"/>
    <property type="evidence" value="ECO:0007669"/>
    <property type="project" value="UniProtKB-SubCell"/>
</dbReference>
<dbReference type="GO" id="GO:0016020">
    <property type="term" value="C:membrane"/>
    <property type="evidence" value="ECO:0007669"/>
    <property type="project" value="GOC"/>
</dbReference>
<dbReference type="GO" id="GO:0019134">
    <property type="term" value="F:glucosamine-1-phosphate N-acetyltransferase activity"/>
    <property type="evidence" value="ECO:0007669"/>
    <property type="project" value="UniProtKB-UniRule"/>
</dbReference>
<dbReference type="GO" id="GO:0000287">
    <property type="term" value="F:magnesium ion binding"/>
    <property type="evidence" value="ECO:0007669"/>
    <property type="project" value="UniProtKB-UniRule"/>
</dbReference>
<dbReference type="GO" id="GO:0003977">
    <property type="term" value="F:UDP-N-acetylglucosamine diphosphorylase activity"/>
    <property type="evidence" value="ECO:0007669"/>
    <property type="project" value="UniProtKB-UniRule"/>
</dbReference>
<dbReference type="GO" id="GO:0000902">
    <property type="term" value="P:cell morphogenesis"/>
    <property type="evidence" value="ECO:0007669"/>
    <property type="project" value="UniProtKB-UniRule"/>
</dbReference>
<dbReference type="GO" id="GO:0071555">
    <property type="term" value="P:cell wall organization"/>
    <property type="evidence" value="ECO:0007669"/>
    <property type="project" value="UniProtKB-KW"/>
</dbReference>
<dbReference type="GO" id="GO:0009245">
    <property type="term" value="P:lipid A biosynthetic process"/>
    <property type="evidence" value="ECO:0007669"/>
    <property type="project" value="UniProtKB-UniRule"/>
</dbReference>
<dbReference type="GO" id="GO:0009252">
    <property type="term" value="P:peptidoglycan biosynthetic process"/>
    <property type="evidence" value="ECO:0007669"/>
    <property type="project" value="UniProtKB-UniRule"/>
</dbReference>
<dbReference type="GO" id="GO:0008360">
    <property type="term" value="P:regulation of cell shape"/>
    <property type="evidence" value="ECO:0007669"/>
    <property type="project" value="UniProtKB-KW"/>
</dbReference>
<dbReference type="GO" id="GO:0006048">
    <property type="term" value="P:UDP-N-acetylglucosamine biosynthetic process"/>
    <property type="evidence" value="ECO:0007669"/>
    <property type="project" value="UniProtKB-UniPathway"/>
</dbReference>
<dbReference type="CDD" id="cd02540">
    <property type="entry name" value="GT2_GlmU_N_bac"/>
    <property type="match status" value="1"/>
</dbReference>
<dbReference type="CDD" id="cd03353">
    <property type="entry name" value="LbH_GlmU_C"/>
    <property type="match status" value="1"/>
</dbReference>
<dbReference type="FunFam" id="2.160.10.10:FF:000028">
    <property type="entry name" value="Bifunctional protein GlmU"/>
    <property type="match status" value="1"/>
</dbReference>
<dbReference type="FunFam" id="3.90.550.10:FF:000006">
    <property type="entry name" value="Bifunctional protein GlmU"/>
    <property type="match status" value="1"/>
</dbReference>
<dbReference type="Gene3D" id="2.160.10.10">
    <property type="entry name" value="Hexapeptide repeat proteins"/>
    <property type="match status" value="1"/>
</dbReference>
<dbReference type="Gene3D" id="3.90.550.10">
    <property type="entry name" value="Spore Coat Polysaccharide Biosynthesis Protein SpsA, Chain A"/>
    <property type="match status" value="1"/>
</dbReference>
<dbReference type="HAMAP" id="MF_01631">
    <property type="entry name" value="GlmU"/>
    <property type="match status" value="1"/>
</dbReference>
<dbReference type="InterPro" id="IPR005882">
    <property type="entry name" value="Bifunctional_GlmU"/>
</dbReference>
<dbReference type="InterPro" id="IPR050065">
    <property type="entry name" value="GlmU-like"/>
</dbReference>
<dbReference type="InterPro" id="IPR038009">
    <property type="entry name" value="GlmU_C_LbH"/>
</dbReference>
<dbReference type="InterPro" id="IPR001451">
    <property type="entry name" value="Hexapep"/>
</dbReference>
<dbReference type="InterPro" id="IPR025877">
    <property type="entry name" value="MobA-like_NTP_Trfase"/>
</dbReference>
<dbReference type="InterPro" id="IPR029044">
    <property type="entry name" value="Nucleotide-diphossugar_trans"/>
</dbReference>
<dbReference type="InterPro" id="IPR011004">
    <property type="entry name" value="Trimer_LpxA-like_sf"/>
</dbReference>
<dbReference type="NCBIfam" id="TIGR01173">
    <property type="entry name" value="glmU"/>
    <property type="match status" value="1"/>
</dbReference>
<dbReference type="NCBIfam" id="NF010932">
    <property type="entry name" value="PRK14352.1"/>
    <property type="match status" value="1"/>
</dbReference>
<dbReference type="PANTHER" id="PTHR43584:SF3">
    <property type="entry name" value="BIFUNCTIONAL PROTEIN GLMU"/>
    <property type="match status" value="1"/>
</dbReference>
<dbReference type="PANTHER" id="PTHR43584">
    <property type="entry name" value="NUCLEOTIDYL TRANSFERASE"/>
    <property type="match status" value="1"/>
</dbReference>
<dbReference type="Pfam" id="PF00132">
    <property type="entry name" value="Hexapep"/>
    <property type="match status" value="1"/>
</dbReference>
<dbReference type="Pfam" id="PF12804">
    <property type="entry name" value="NTP_transf_3"/>
    <property type="match status" value="1"/>
</dbReference>
<dbReference type="SUPFAM" id="SSF53448">
    <property type="entry name" value="Nucleotide-diphospho-sugar transferases"/>
    <property type="match status" value="1"/>
</dbReference>
<dbReference type="SUPFAM" id="SSF51161">
    <property type="entry name" value="Trimeric LpxA-like enzymes"/>
    <property type="match status" value="1"/>
</dbReference>
<proteinExistence type="inferred from homology"/>
<name>GLMU_MYCBT</name>